<feature type="chain" id="PRO_1000080251" description="Large ribosomal subunit protein bL34">
    <location>
        <begin position="1"/>
        <end position="44"/>
    </location>
</feature>
<dbReference type="EMBL" id="CP000937">
    <property type="protein sequence ID" value="ABZ86978.1"/>
    <property type="molecule type" value="Genomic_DNA"/>
</dbReference>
<dbReference type="SMR" id="B0TW70"/>
<dbReference type="KEGG" id="fph:Fphi_0757"/>
<dbReference type="eggNOG" id="COG0230">
    <property type="taxonomic scope" value="Bacteria"/>
</dbReference>
<dbReference type="HOGENOM" id="CLU_129938_2_0_6"/>
<dbReference type="GO" id="GO:1990904">
    <property type="term" value="C:ribonucleoprotein complex"/>
    <property type="evidence" value="ECO:0007669"/>
    <property type="project" value="UniProtKB-KW"/>
</dbReference>
<dbReference type="GO" id="GO:0005840">
    <property type="term" value="C:ribosome"/>
    <property type="evidence" value="ECO:0007669"/>
    <property type="project" value="UniProtKB-KW"/>
</dbReference>
<dbReference type="GO" id="GO:0003735">
    <property type="term" value="F:structural constituent of ribosome"/>
    <property type="evidence" value="ECO:0007669"/>
    <property type="project" value="InterPro"/>
</dbReference>
<dbReference type="GO" id="GO:0006412">
    <property type="term" value="P:translation"/>
    <property type="evidence" value="ECO:0007669"/>
    <property type="project" value="UniProtKB-UniRule"/>
</dbReference>
<dbReference type="FunFam" id="1.10.287.3980:FF:000001">
    <property type="entry name" value="Mitochondrial ribosomal protein L34"/>
    <property type="match status" value="1"/>
</dbReference>
<dbReference type="Gene3D" id="1.10.287.3980">
    <property type="match status" value="1"/>
</dbReference>
<dbReference type="HAMAP" id="MF_00391">
    <property type="entry name" value="Ribosomal_bL34"/>
    <property type="match status" value="1"/>
</dbReference>
<dbReference type="InterPro" id="IPR000271">
    <property type="entry name" value="Ribosomal_bL34"/>
</dbReference>
<dbReference type="InterPro" id="IPR020939">
    <property type="entry name" value="Ribosomal_bL34_CS"/>
</dbReference>
<dbReference type="NCBIfam" id="TIGR01030">
    <property type="entry name" value="rpmH_bact"/>
    <property type="match status" value="1"/>
</dbReference>
<dbReference type="PANTHER" id="PTHR14503:SF4">
    <property type="entry name" value="LARGE RIBOSOMAL SUBUNIT PROTEIN BL34M"/>
    <property type="match status" value="1"/>
</dbReference>
<dbReference type="PANTHER" id="PTHR14503">
    <property type="entry name" value="MITOCHONDRIAL RIBOSOMAL PROTEIN 34 FAMILY MEMBER"/>
    <property type="match status" value="1"/>
</dbReference>
<dbReference type="Pfam" id="PF00468">
    <property type="entry name" value="Ribosomal_L34"/>
    <property type="match status" value="1"/>
</dbReference>
<dbReference type="PROSITE" id="PS00784">
    <property type="entry name" value="RIBOSOMAL_L34"/>
    <property type="match status" value="1"/>
</dbReference>
<name>RL34_FRAP2</name>
<evidence type="ECO:0000255" key="1">
    <source>
        <dbReference type="HAMAP-Rule" id="MF_00391"/>
    </source>
</evidence>
<evidence type="ECO:0000305" key="2"/>
<comment type="similarity">
    <text evidence="1">Belongs to the bacterial ribosomal protein bL34 family.</text>
</comment>
<sequence length="44" mass="5180">MKRTFQPSNLKRKRTHGFRARMKTLSGRKVIRNRRAKGRAKLAA</sequence>
<proteinExistence type="inferred from homology"/>
<organism>
    <name type="scientific">Francisella philomiragia subsp. philomiragia (strain ATCC 25017 / CCUG 19701 / FSC 153 / O#319-036)</name>
    <dbReference type="NCBI Taxonomy" id="484022"/>
    <lineage>
        <taxon>Bacteria</taxon>
        <taxon>Pseudomonadati</taxon>
        <taxon>Pseudomonadota</taxon>
        <taxon>Gammaproteobacteria</taxon>
        <taxon>Thiotrichales</taxon>
        <taxon>Francisellaceae</taxon>
        <taxon>Francisella</taxon>
    </lineage>
</organism>
<gene>
    <name evidence="1" type="primary">rpmH</name>
    <name type="ordered locus">Fphi_0757</name>
</gene>
<reference key="1">
    <citation type="submission" date="2007-12" db="EMBL/GenBank/DDBJ databases">
        <title>Complete sequence of chromosome of Francisella philomiragia subsp. philomiragia ATCC 25017.</title>
        <authorList>
            <consortium name="US DOE Joint Genome Institute"/>
            <person name="Copeland A."/>
            <person name="Lucas S."/>
            <person name="Lapidus A."/>
            <person name="Barry K."/>
            <person name="Detter J.C."/>
            <person name="Glavina del Rio T."/>
            <person name="Hammon N."/>
            <person name="Israni S."/>
            <person name="Dalin E."/>
            <person name="Tice H."/>
            <person name="Pitluck S."/>
            <person name="Chain P."/>
            <person name="Malfatti S."/>
            <person name="Shin M."/>
            <person name="Vergez L."/>
            <person name="Schmutz J."/>
            <person name="Larimer F."/>
            <person name="Land M."/>
            <person name="Hauser L."/>
            <person name="Richardson P."/>
        </authorList>
    </citation>
    <scope>NUCLEOTIDE SEQUENCE [LARGE SCALE GENOMIC DNA]</scope>
    <source>
        <strain>ATCC 25017 / CCUG 19701 / FSC 153 / O#319-036</strain>
    </source>
</reference>
<accession>B0TW70</accession>
<protein>
    <recommendedName>
        <fullName evidence="1">Large ribosomal subunit protein bL34</fullName>
    </recommendedName>
    <alternativeName>
        <fullName evidence="2">50S ribosomal protein L34</fullName>
    </alternativeName>
</protein>
<keyword id="KW-0687">Ribonucleoprotein</keyword>
<keyword id="KW-0689">Ribosomal protein</keyword>